<sequence length="107" mass="12008">MEDGVQAMRDYLAGLDIASPEHQVLMNVTAKSEVAPSIIKENLSLHLTHTVKWTESLDTFLNMPTPVAFLEISNKPYLGNMLNDFAGVDQQRVMHCRKAFSDAKVFK</sequence>
<proteinExistence type="uncertain"/>
<comment type="caution">
    <text evidence="1">Could be the product of a pseudogene.</text>
</comment>
<keyword id="KW-1185">Reference proteome</keyword>
<organism>
    <name type="scientific">Escherichia coli (strain K12)</name>
    <dbReference type="NCBI Taxonomy" id="83333"/>
    <lineage>
        <taxon>Bacteria</taxon>
        <taxon>Pseudomonadati</taxon>
        <taxon>Pseudomonadota</taxon>
        <taxon>Gammaproteobacteria</taxon>
        <taxon>Enterobacterales</taxon>
        <taxon>Enterobacteriaceae</taxon>
        <taxon>Escherichia</taxon>
    </lineage>
</organism>
<feature type="chain" id="PRO_0000273579" description="Putative uncharacterized protein YmdE">
    <location>
        <begin position="1"/>
        <end position="107"/>
    </location>
</feature>
<gene>
    <name type="primary">ymdE</name>
    <name type="ordered locus">b1028</name>
</gene>
<evidence type="ECO:0000305" key="1"/>
<reference key="1">
    <citation type="journal article" date="1997" name="Science">
        <title>The complete genome sequence of Escherichia coli K-12.</title>
        <authorList>
            <person name="Blattner F.R."/>
            <person name="Plunkett G. III"/>
            <person name="Bloch C.A."/>
            <person name="Perna N.T."/>
            <person name="Burland V."/>
            <person name="Riley M."/>
            <person name="Collado-Vides J."/>
            <person name="Glasner J.D."/>
            <person name="Rode C.K."/>
            <person name="Mayhew G.F."/>
            <person name="Gregor J."/>
            <person name="Davis N.W."/>
            <person name="Kirkpatrick H.A."/>
            <person name="Goeden M.A."/>
            <person name="Rose D.J."/>
            <person name="Mau B."/>
            <person name="Shao Y."/>
        </authorList>
    </citation>
    <scope>NUCLEOTIDE SEQUENCE [LARGE SCALE GENOMIC DNA]</scope>
    <source>
        <strain>K12 / MG1655 / ATCC 47076</strain>
    </source>
</reference>
<accession>Q7DFV4</accession>
<name>YMDE_ECOLI</name>
<dbReference type="EMBL" id="U00096">
    <property type="status" value="NOT_ANNOTATED_CDS"/>
    <property type="molecule type" value="Genomic_DNA"/>
</dbReference>
<dbReference type="PIR" id="B64845">
    <property type="entry name" value="B64845"/>
</dbReference>
<dbReference type="SMR" id="Q7DFV4"/>
<dbReference type="FunCoup" id="Q7DFV4">
    <property type="interactions" value="323"/>
</dbReference>
<dbReference type="IntAct" id="Q7DFV4">
    <property type="interactions" value="5"/>
</dbReference>
<dbReference type="KEGG" id="ecoc:C3026_06260"/>
<dbReference type="PATRIC" id="fig|83333.103.peg.1814"/>
<dbReference type="InParanoid" id="Q7DFV4"/>
<dbReference type="OrthoDB" id="9808564at2"/>
<dbReference type="Proteomes" id="UP000000625">
    <property type="component" value="Chromosome"/>
</dbReference>
<dbReference type="GO" id="GO:0016740">
    <property type="term" value="F:transferase activity"/>
    <property type="evidence" value="ECO:0007669"/>
    <property type="project" value="InterPro"/>
</dbReference>
<dbReference type="Gene3D" id="3.40.366.10">
    <property type="entry name" value="Malonyl-Coenzyme A Acyl Carrier Protein, domain 2"/>
    <property type="match status" value="1"/>
</dbReference>
<dbReference type="InterPro" id="IPR001227">
    <property type="entry name" value="Ac_transferase_dom_sf"/>
</dbReference>
<dbReference type="InterPro" id="IPR016035">
    <property type="entry name" value="Acyl_Trfase/lysoPLipase"/>
</dbReference>
<dbReference type="InterPro" id="IPR050858">
    <property type="entry name" value="Mal-CoA-ACP_Trans/PKS_FabD"/>
</dbReference>
<dbReference type="PANTHER" id="PTHR42681:SF6">
    <property type="entry name" value="BLL0263 PROTEIN"/>
    <property type="match status" value="1"/>
</dbReference>
<dbReference type="PANTHER" id="PTHR42681">
    <property type="entry name" value="MALONYL-COA-ACYL CARRIER PROTEIN TRANSACYLASE, MITOCHONDRIAL"/>
    <property type="match status" value="1"/>
</dbReference>
<dbReference type="SUPFAM" id="SSF52151">
    <property type="entry name" value="FabD/lysophospholipase-like"/>
    <property type="match status" value="1"/>
</dbReference>
<protein>
    <recommendedName>
        <fullName>Putative uncharacterized protein YmdE</fullName>
    </recommendedName>
</protein>